<organism>
    <name type="scientific">Pectobacterium atrosepticum (strain SCRI 1043 / ATCC BAA-672)</name>
    <name type="common">Erwinia carotovora subsp. atroseptica</name>
    <dbReference type="NCBI Taxonomy" id="218491"/>
    <lineage>
        <taxon>Bacteria</taxon>
        <taxon>Pseudomonadati</taxon>
        <taxon>Pseudomonadota</taxon>
        <taxon>Gammaproteobacteria</taxon>
        <taxon>Enterobacterales</taxon>
        <taxon>Pectobacteriaceae</taxon>
        <taxon>Pectobacterium</taxon>
    </lineage>
</organism>
<protein>
    <recommendedName>
        <fullName evidence="1">Pyridoxine/pyridoxamine 5'-phosphate oxidase</fullName>
        <ecNumber evidence="1">1.4.3.5</ecNumber>
    </recommendedName>
    <alternativeName>
        <fullName evidence="1">PNP/PMP oxidase</fullName>
        <shortName evidence="1">PNPOx</shortName>
    </alternativeName>
    <alternativeName>
        <fullName evidence="1">Pyridoxal 5'-phosphate synthase</fullName>
    </alternativeName>
</protein>
<keyword id="KW-0285">Flavoprotein</keyword>
<keyword id="KW-0288">FMN</keyword>
<keyword id="KW-0560">Oxidoreductase</keyword>
<keyword id="KW-0664">Pyridoxine biosynthesis</keyword>
<keyword id="KW-1185">Reference proteome</keyword>
<proteinExistence type="inferred from homology"/>
<reference key="1">
    <citation type="journal article" date="2004" name="Proc. Natl. Acad. Sci. U.S.A.">
        <title>Genome sequence of the enterobacterial phytopathogen Erwinia carotovora subsp. atroseptica and characterization of virulence factors.</title>
        <authorList>
            <person name="Bell K.S."/>
            <person name="Sebaihia M."/>
            <person name="Pritchard L."/>
            <person name="Holden M.T.G."/>
            <person name="Hyman L.J."/>
            <person name="Holeva M.C."/>
            <person name="Thomson N.R."/>
            <person name="Bentley S.D."/>
            <person name="Churcher L.J.C."/>
            <person name="Mungall K."/>
            <person name="Atkin R."/>
            <person name="Bason N."/>
            <person name="Brooks K."/>
            <person name="Chillingworth T."/>
            <person name="Clark K."/>
            <person name="Doggett J."/>
            <person name="Fraser A."/>
            <person name="Hance Z."/>
            <person name="Hauser H."/>
            <person name="Jagels K."/>
            <person name="Moule S."/>
            <person name="Norbertczak H."/>
            <person name="Ormond D."/>
            <person name="Price C."/>
            <person name="Quail M.A."/>
            <person name="Sanders M."/>
            <person name="Walker D."/>
            <person name="Whitehead S."/>
            <person name="Salmond G.P.C."/>
            <person name="Birch P.R.J."/>
            <person name="Parkhill J."/>
            <person name="Toth I.K."/>
        </authorList>
    </citation>
    <scope>NUCLEOTIDE SEQUENCE [LARGE SCALE GENOMIC DNA]</scope>
    <source>
        <strain>SCRI 1043 / ATCC BAA-672</strain>
    </source>
</reference>
<comment type="function">
    <text evidence="1">Catalyzes the oxidation of either pyridoxine 5'-phosphate (PNP) or pyridoxamine 5'-phosphate (PMP) into pyridoxal 5'-phosphate (PLP).</text>
</comment>
<comment type="catalytic activity">
    <reaction evidence="1">
        <text>pyridoxamine 5'-phosphate + O2 + H2O = pyridoxal 5'-phosphate + H2O2 + NH4(+)</text>
        <dbReference type="Rhea" id="RHEA:15817"/>
        <dbReference type="ChEBI" id="CHEBI:15377"/>
        <dbReference type="ChEBI" id="CHEBI:15379"/>
        <dbReference type="ChEBI" id="CHEBI:16240"/>
        <dbReference type="ChEBI" id="CHEBI:28938"/>
        <dbReference type="ChEBI" id="CHEBI:58451"/>
        <dbReference type="ChEBI" id="CHEBI:597326"/>
        <dbReference type="EC" id="1.4.3.5"/>
    </reaction>
</comment>
<comment type="catalytic activity">
    <reaction evidence="1">
        <text>pyridoxine 5'-phosphate + O2 = pyridoxal 5'-phosphate + H2O2</text>
        <dbReference type="Rhea" id="RHEA:15149"/>
        <dbReference type="ChEBI" id="CHEBI:15379"/>
        <dbReference type="ChEBI" id="CHEBI:16240"/>
        <dbReference type="ChEBI" id="CHEBI:58589"/>
        <dbReference type="ChEBI" id="CHEBI:597326"/>
        <dbReference type="EC" id="1.4.3.5"/>
    </reaction>
</comment>
<comment type="cofactor">
    <cofactor evidence="1">
        <name>FMN</name>
        <dbReference type="ChEBI" id="CHEBI:58210"/>
    </cofactor>
    <text evidence="1">Binds 1 FMN per subunit.</text>
</comment>
<comment type="pathway">
    <text evidence="1">Cofactor metabolism; pyridoxal 5'-phosphate salvage; pyridoxal 5'-phosphate from pyridoxamine 5'-phosphate: step 1/1.</text>
</comment>
<comment type="pathway">
    <text evidence="1">Cofactor metabolism; pyridoxal 5'-phosphate salvage; pyridoxal 5'-phosphate from pyridoxine 5'-phosphate: step 1/1.</text>
</comment>
<comment type="subunit">
    <text evidence="1">Homodimer.</text>
</comment>
<comment type="similarity">
    <text evidence="1">Belongs to the pyridoxamine 5'-phosphate oxidase family.</text>
</comment>
<gene>
    <name evidence="1" type="primary">pdxH</name>
    <name type="ordered locus">ECA1935</name>
</gene>
<sequence length="227" mass="26398">MTQERSPSDGTPLIQPADIADIRREYTRGGLRRGDLPANPLDLFERWLKQACEAKLADPTAMSVATVDERGQPYQRIVLLKHYDEKGMVFYTNMGSRKAHHLENNPRISLLFPWHVLERQVMVLGRVEKLPALEVLKYFHSRPKDSQIGAWVSKQSSRISARGVLESKFLELKQKFQNGEVPLPSFWGGFRVVIDSVEFWQGGEHRLHDRFFYQRQEENWQIDRLAP</sequence>
<dbReference type="EC" id="1.4.3.5" evidence="1"/>
<dbReference type="EMBL" id="BX950851">
    <property type="protein sequence ID" value="CAG74838.1"/>
    <property type="molecule type" value="Genomic_DNA"/>
</dbReference>
<dbReference type="RefSeq" id="WP_011093501.1">
    <property type="nucleotide sequence ID" value="NC_004547.2"/>
</dbReference>
<dbReference type="SMR" id="Q6D5V3"/>
<dbReference type="STRING" id="218491.ECA1935"/>
<dbReference type="GeneID" id="57209360"/>
<dbReference type="KEGG" id="eca:ECA1935"/>
<dbReference type="PATRIC" id="fig|218491.5.peg.1968"/>
<dbReference type="eggNOG" id="COG0259">
    <property type="taxonomic scope" value="Bacteria"/>
</dbReference>
<dbReference type="HOGENOM" id="CLU_032263_2_2_6"/>
<dbReference type="OrthoDB" id="9780392at2"/>
<dbReference type="UniPathway" id="UPA01068">
    <property type="reaction ID" value="UER00304"/>
</dbReference>
<dbReference type="UniPathway" id="UPA01068">
    <property type="reaction ID" value="UER00305"/>
</dbReference>
<dbReference type="Proteomes" id="UP000007966">
    <property type="component" value="Chromosome"/>
</dbReference>
<dbReference type="GO" id="GO:0010181">
    <property type="term" value="F:FMN binding"/>
    <property type="evidence" value="ECO:0007669"/>
    <property type="project" value="UniProtKB-UniRule"/>
</dbReference>
<dbReference type="GO" id="GO:0004733">
    <property type="term" value="F:pyridoxamine phosphate oxidase activity"/>
    <property type="evidence" value="ECO:0007669"/>
    <property type="project" value="UniProtKB-UniRule"/>
</dbReference>
<dbReference type="GO" id="GO:0008615">
    <property type="term" value="P:pyridoxine biosynthetic process"/>
    <property type="evidence" value="ECO:0007669"/>
    <property type="project" value="UniProtKB-KW"/>
</dbReference>
<dbReference type="FunFam" id="2.30.110.10:FF:000001">
    <property type="entry name" value="Pyridoxine/pyridoxamine 5'-phosphate oxidase"/>
    <property type="match status" value="1"/>
</dbReference>
<dbReference type="Gene3D" id="2.30.110.10">
    <property type="entry name" value="Electron Transport, Fmn-binding Protein, Chain A"/>
    <property type="match status" value="1"/>
</dbReference>
<dbReference type="HAMAP" id="MF_01629">
    <property type="entry name" value="PdxH"/>
    <property type="match status" value="1"/>
</dbReference>
<dbReference type="InterPro" id="IPR000659">
    <property type="entry name" value="Pyridox_Oxase"/>
</dbReference>
<dbReference type="InterPro" id="IPR019740">
    <property type="entry name" value="Pyridox_Oxase_CS"/>
</dbReference>
<dbReference type="InterPro" id="IPR011576">
    <property type="entry name" value="Pyridox_Oxase_N"/>
</dbReference>
<dbReference type="InterPro" id="IPR019576">
    <property type="entry name" value="Pyridoxamine_oxidase_dimer_C"/>
</dbReference>
<dbReference type="InterPro" id="IPR012349">
    <property type="entry name" value="Split_barrel_FMN-bd"/>
</dbReference>
<dbReference type="NCBIfam" id="TIGR00558">
    <property type="entry name" value="pdxH"/>
    <property type="match status" value="1"/>
</dbReference>
<dbReference type="NCBIfam" id="NF004231">
    <property type="entry name" value="PRK05679.1"/>
    <property type="match status" value="1"/>
</dbReference>
<dbReference type="PANTHER" id="PTHR10851:SF0">
    <property type="entry name" value="PYRIDOXINE-5'-PHOSPHATE OXIDASE"/>
    <property type="match status" value="1"/>
</dbReference>
<dbReference type="PANTHER" id="PTHR10851">
    <property type="entry name" value="PYRIDOXINE-5-PHOSPHATE OXIDASE"/>
    <property type="match status" value="1"/>
</dbReference>
<dbReference type="Pfam" id="PF10590">
    <property type="entry name" value="PNP_phzG_C"/>
    <property type="match status" value="1"/>
</dbReference>
<dbReference type="Pfam" id="PF01243">
    <property type="entry name" value="PNPOx_N"/>
    <property type="match status" value="1"/>
</dbReference>
<dbReference type="PIRSF" id="PIRSF000190">
    <property type="entry name" value="Pyd_amn-ph_oxd"/>
    <property type="match status" value="1"/>
</dbReference>
<dbReference type="SUPFAM" id="SSF50475">
    <property type="entry name" value="FMN-binding split barrel"/>
    <property type="match status" value="1"/>
</dbReference>
<dbReference type="PROSITE" id="PS01064">
    <property type="entry name" value="PYRIDOX_OXIDASE"/>
    <property type="match status" value="1"/>
</dbReference>
<evidence type="ECO:0000255" key="1">
    <source>
        <dbReference type="HAMAP-Rule" id="MF_01629"/>
    </source>
</evidence>
<accession>Q6D5V3</accession>
<name>PDXH_PECAS</name>
<feature type="chain" id="PRO_0000167705" description="Pyridoxine/pyridoxamine 5'-phosphate oxidase">
    <location>
        <begin position="1"/>
        <end position="227"/>
    </location>
</feature>
<feature type="binding site" evidence="1">
    <location>
        <begin position="23"/>
        <end position="26"/>
    </location>
    <ligand>
        <name>substrate</name>
    </ligand>
</feature>
<feature type="binding site" evidence="1">
    <location>
        <begin position="76"/>
        <end position="81"/>
    </location>
    <ligand>
        <name>FMN</name>
        <dbReference type="ChEBI" id="CHEBI:58210"/>
    </ligand>
</feature>
<feature type="binding site" evidence="1">
    <location>
        <position position="81"/>
    </location>
    <ligand>
        <name>substrate</name>
    </ligand>
</feature>
<feature type="binding site" evidence="1">
    <location>
        <begin position="91"/>
        <end position="92"/>
    </location>
    <ligand>
        <name>FMN</name>
        <dbReference type="ChEBI" id="CHEBI:58210"/>
    </ligand>
</feature>
<feature type="binding site" evidence="1">
    <location>
        <position position="97"/>
    </location>
    <ligand>
        <name>FMN</name>
        <dbReference type="ChEBI" id="CHEBI:58210"/>
    </ligand>
</feature>
<feature type="binding site" evidence="1">
    <location>
        <position position="98"/>
    </location>
    <ligand>
        <name>FMN</name>
        <dbReference type="ChEBI" id="CHEBI:58210"/>
    </ligand>
</feature>
<feature type="binding site" evidence="1">
    <location>
        <position position="120"/>
    </location>
    <ligand>
        <name>FMN</name>
        <dbReference type="ChEBI" id="CHEBI:58210"/>
    </ligand>
</feature>
<feature type="binding site" evidence="1">
    <location>
        <position position="138"/>
    </location>
    <ligand>
        <name>substrate</name>
    </ligand>
</feature>
<feature type="binding site" evidence="1">
    <location>
        <position position="142"/>
    </location>
    <ligand>
        <name>substrate</name>
    </ligand>
</feature>
<feature type="binding site" evidence="1">
    <location>
        <position position="146"/>
    </location>
    <ligand>
        <name>substrate</name>
    </ligand>
</feature>
<feature type="binding site" evidence="1">
    <location>
        <begin position="155"/>
        <end position="156"/>
    </location>
    <ligand>
        <name>FMN</name>
        <dbReference type="ChEBI" id="CHEBI:58210"/>
    </ligand>
</feature>
<feature type="binding site" evidence="1">
    <location>
        <position position="200"/>
    </location>
    <ligand>
        <name>FMN</name>
        <dbReference type="ChEBI" id="CHEBI:58210"/>
    </ligand>
</feature>
<feature type="binding site" evidence="1">
    <location>
        <begin position="206"/>
        <end position="208"/>
    </location>
    <ligand>
        <name>substrate</name>
    </ligand>
</feature>
<feature type="binding site" evidence="1">
    <location>
        <position position="210"/>
    </location>
    <ligand>
        <name>FMN</name>
        <dbReference type="ChEBI" id="CHEBI:58210"/>
    </ligand>
</feature>